<keyword id="KW-0963">Cytoplasm</keyword>
<keyword id="KW-0664">Pyridoxine biosynthesis</keyword>
<keyword id="KW-0808">Transferase</keyword>
<comment type="function">
    <text evidence="1">Catalyzes the complicated ring closure reaction between the two acyclic compounds 1-deoxy-D-xylulose-5-phosphate (DXP) and 3-amino-2-oxopropyl phosphate (1-amino-acetone-3-phosphate or AAP) to form pyridoxine 5'-phosphate (PNP) and inorganic phosphate.</text>
</comment>
<comment type="catalytic activity">
    <reaction evidence="1">
        <text>3-amino-2-oxopropyl phosphate + 1-deoxy-D-xylulose 5-phosphate = pyridoxine 5'-phosphate + phosphate + 2 H2O + H(+)</text>
        <dbReference type="Rhea" id="RHEA:15265"/>
        <dbReference type="ChEBI" id="CHEBI:15377"/>
        <dbReference type="ChEBI" id="CHEBI:15378"/>
        <dbReference type="ChEBI" id="CHEBI:43474"/>
        <dbReference type="ChEBI" id="CHEBI:57279"/>
        <dbReference type="ChEBI" id="CHEBI:57792"/>
        <dbReference type="ChEBI" id="CHEBI:58589"/>
        <dbReference type="EC" id="2.6.99.2"/>
    </reaction>
</comment>
<comment type="pathway">
    <text evidence="1">Cofactor biosynthesis; pyridoxine 5'-phosphate biosynthesis; pyridoxine 5'-phosphate from D-erythrose 4-phosphate: step 5/5.</text>
</comment>
<comment type="subunit">
    <text evidence="1">Homooctamer; tetramer of dimers.</text>
</comment>
<comment type="subcellular location">
    <subcellularLocation>
        <location evidence="1">Cytoplasm</location>
    </subcellularLocation>
</comment>
<comment type="similarity">
    <text evidence="1">Belongs to the PNP synthase family.</text>
</comment>
<organism>
    <name type="scientific">Prochlorococcus marinus (strain MIT 9515)</name>
    <dbReference type="NCBI Taxonomy" id="167542"/>
    <lineage>
        <taxon>Bacteria</taxon>
        <taxon>Bacillati</taxon>
        <taxon>Cyanobacteriota</taxon>
        <taxon>Cyanophyceae</taxon>
        <taxon>Synechococcales</taxon>
        <taxon>Prochlorococcaceae</taxon>
        <taxon>Prochlorococcus</taxon>
    </lineage>
</organism>
<name>PDXJ_PROM5</name>
<gene>
    <name evidence="1" type="primary">pdxJ</name>
    <name type="ordered locus">P9515_11981</name>
</gene>
<proteinExistence type="inferred from homology"/>
<feature type="chain" id="PRO_1000022388" description="Pyridoxine 5'-phosphate synthase">
    <location>
        <begin position="1"/>
        <end position="238"/>
    </location>
</feature>
<feature type="active site" description="Proton acceptor" evidence="1">
    <location>
        <position position="43"/>
    </location>
</feature>
<feature type="active site" description="Proton acceptor" evidence="1">
    <location>
        <position position="70"/>
    </location>
</feature>
<feature type="active site" description="Proton donor" evidence="1">
    <location>
        <position position="190"/>
    </location>
</feature>
<feature type="binding site" evidence="1">
    <location>
        <position position="7"/>
    </location>
    <ligand>
        <name>3-amino-2-oxopropyl phosphate</name>
        <dbReference type="ChEBI" id="CHEBI:57279"/>
    </ligand>
</feature>
<feature type="binding site" evidence="1">
    <location>
        <begin position="9"/>
        <end position="10"/>
    </location>
    <ligand>
        <name>1-deoxy-D-xylulose 5-phosphate</name>
        <dbReference type="ChEBI" id="CHEBI:57792"/>
    </ligand>
</feature>
<feature type="binding site" evidence="1">
    <location>
        <position position="18"/>
    </location>
    <ligand>
        <name>3-amino-2-oxopropyl phosphate</name>
        <dbReference type="ChEBI" id="CHEBI:57279"/>
    </ligand>
</feature>
<feature type="binding site" evidence="1">
    <location>
        <position position="45"/>
    </location>
    <ligand>
        <name>1-deoxy-D-xylulose 5-phosphate</name>
        <dbReference type="ChEBI" id="CHEBI:57792"/>
    </ligand>
</feature>
<feature type="binding site" evidence="1">
    <location>
        <position position="50"/>
    </location>
    <ligand>
        <name>1-deoxy-D-xylulose 5-phosphate</name>
        <dbReference type="ChEBI" id="CHEBI:57792"/>
    </ligand>
</feature>
<feature type="binding site" evidence="1">
    <location>
        <position position="100"/>
    </location>
    <ligand>
        <name>1-deoxy-D-xylulose 5-phosphate</name>
        <dbReference type="ChEBI" id="CHEBI:57792"/>
    </ligand>
</feature>
<feature type="binding site" evidence="1">
    <location>
        <position position="191"/>
    </location>
    <ligand>
        <name>3-amino-2-oxopropyl phosphate</name>
        <dbReference type="ChEBI" id="CHEBI:57279"/>
    </ligand>
</feature>
<feature type="binding site" evidence="1">
    <location>
        <begin position="212"/>
        <end position="213"/>
    </location>
    <ligand>
        <name>3-amino-2-oxopropyl phosphate</name>
        <dbReference type="ChEBI" id="CHEBI:57279"/>
    </ligand>
</feature>
<feature type="site" description="Transition state stabilizer" evidence="1">
    <location>
        <position position="151"/>
    </location>
</feature>
<protein>
    <recommendedName>
        <fullName evidence="1">Pyridoxine 5'-phosphate synthase</fullName>
        <shortName evidence="1">PNP synthase</shortName>
        <ecNumber evidence="1">2.6.99.2</ecNumber>
    </recommendedName>
</protein>
<reference key="1">
    <citation type="journal article" date="2007" name="PLoS Genet.">
        <title>Patterns and implications of gene gain and loss in the evolution of Prochlorococcus.</title>
        <authorList>
            <person name="Kettler G.C."/>
            <person name="Martiny A.C."/>
            <person name="Huang K."/>
            <person name="Zucker J."/>
            <person name="Coleman M.L."/>
            <person name="Rodrigue S."/>
            <person name="Chen F."/>
            <person name="Lapidus A."/>
            <person name="Ferriera S."/>
            <person name="Johnson J."/>
            <person name="Steglich C."/>
            <person name="Church G.M."/>
            <person name="Richardson P."/>
            <person name="Chisholm S.W."/>
        </authorList>
    </citation>
    <scope>NUCLEOTIDE SEQUENCE [LARGE SCALE GENOMIC DNA]</scope>
    <source>
        <strain>MIT 9515</strain>
    </source>
</reference>
<evidence type="ECO:0000255" key="1">
    <source>
        <dbReference type="HAMAP-Rule" id="MF_00279"/>
    </source>
</evidence>
<accession>A2BX94</accession>
<dbReference type="EC" id="2.6.99.2" evidence="1"/>
<dbReference type="EMBL" id="CP000552">
    <property type="protein sequence ID" value="ABM72405.1"/>
    <property type="molecule type" value="Genomic_DNA"/>
</dbReference>
<dbReference type="RefSeq" id="WP_011820505.1">
    <property type="nucleotide sequence ID" value="NC_008817.1"/>
</dbReference>
<dbReference type="SMR" id="A2BX94"/>
<dbReference type="STRING" id="167542.P9515_11981"/>
<dbReference type="GeneID" id="60201894"/>
<dbReference type="KEGG" id="pmc:P9515_11981"/>
<dbReference type="eggNOG" id="COG0854">
    <property type="taxonomic scope" value="Bacteria"/>
</dbReference>
<dbReference type="HOGENOM" id="CLU_074563_0_0_3"/>
<dbReference type="OrthoDB" id="9806590at2"/>
<dbReference type="UniPathway" id="UPA00244">
    <property type="reaction ID" value="UER00313"/>
</dbReference>
<dbReference type="Proteomes" id="UP000001589">
    <property type="component" value="Chromosome"/>
</dbReference>
<dbReference type="GO" id="GO:0005829">
    <property type="term" value="C:cytosol"/>
    <property type="evidence" value="ECO:0007669"/>
    <property type="project" value="TreeGrafter"/>
</dbReference>
<dbReference type="GO" id="GO:0033856">
    <property type="term" value="F:pyridoxine 5'-phosphate synthase activity"/>
    <property type="evidence" value="ECO:0007669"/>
    <property type="project" value="UniProtKB-EC"/>
</dbReference>
<dbReference type="GO" id="GO:0008615">
    <property type="term" value="P:pyridoxine biosynthetic process"/>
    <property type="evidence" value="ECO:0007669"/>
    <property type="project" value="UniProtKB-UniRule"/>
</dbReference>
<dbReference type="CDD" id="cd00003">
    <property type="entry name" value="PNPsynthase"/>
    <property type="match status" value="1"/>
</dbReference>
<dbReference type="Gene3D" id="3.20.20.70">
    <property type="entry name" value="Aldolase class I"/>
    <property type="match status" value="1"/>
</dbReference>
<dbReference type="HAMAP" id="MF_00279">
    <property type="entry name" value="PdxJ"/>
    <property type="match status" value="1"/>
</dbReference>
<dbReference type="InterPro" id="IPR013785">
    <property type="entry name" value="Aldolase_TIM"/>
</dbReference>
<dbReference type="InterPro" id="IPR004569">
    <property type="entry name" value="PyrdxlP_synth_PdxJ"/>
</dbReference>
<dbReference type="InterPro" id="IPR036130">
    <property type="entry name" value="Pyridoxine-5'_phos_synth"/>
</dbReference>
<dbReference type="NCBIfam" id="TIGR00559">
    <property type="entry name" value="pdxJ"/>
    <property type="match status" value="1"/>
</dbReference>
<dbReference type="NCBIfam" id="NF003625">
    <property type="entry name" value="PRK05265.1-3"/>
    <property type="match status" value="1"/>
</dbReference>
<dbReference type="NCBIfam" id="NF003627">
    <property type="entry name" value="PRK05265.1-5"/>
    <property type="match status" value="1"/>
</dbReference>
<dbReference type="PANTHER" id="PTHR30456">
    <property type="entry name" value="PYRIDOXINE 5'-PHOSPHATE SYNTHASE"/>
    <property type="match status" value="1"/>
</dbReference>
<dbReference type="PANTHER" id="PTHR30456:SF0">
    <property type="entry name" value="PYRIDOXINE 5'-PHOSPHATE SYNTHASE"/>
    <property type="match status" value="1"/>
</dbReference>
<dbReference type="Pfam" id="PF03740">
    <property type="entry name" value="PdxJ"/>
    <property type="match status" value="1"/>
</dbReference>
<dbReference type="SUPFAM" id="SSF63892">
    <property type="entry name" value="Pyridoxine 5'-phosphate synthase"/>
    <property type="match status" value="1"/>
</dbReference>
<sequence length="238" mass="26631">MATLGVNIDHIANVRQARRTVEPDPVQFAFLAELGGADSITVHLREDRRHIQDRDIFLLKETIKTKLNLEMAATEEMLKISKKLLPDFVTLVPEKREEVTTEGGLNVKNNQRYLKDYVTSLKSSNIEVSAFIDPLSEQINSSAEIGFDFIELHTGKYSELKGQERYVELQKIIESTHYAFDLGLVVNAGHGLNYQNAEKIASINNINELNIGHSIVARALAVGLERAVSEMKALISTN</sequence>